<gene>
    <name evidence="1" type="primary">rplA</name>
    <name type="ordered locus">BURPS1106A_3819</name>
</gene>
<comment type="function">
    <text evidence="1">Binds directly to 23S rRNA. The L1 stalk is quite mobile in the ribosome, and is involved in E site tRNA release.</text>
</comment>
<comment type="function">
    <text evidence="1">Protein L1 is also a translational repressor protein, it controls the translation of the L11 operon by binding to its mRNA.</text>
</comment>
<comment type="subunit">
    <text evidence="1">Part of the 50S ribosomal subunit.</text>
</comment>
<comment type="similarity">
    <text evidence="1">Belongs to the universal ribosomal protein uL1 family.</text>
</comment>
<accession>A3P0C8</accession>
<proteinExistence type="inferred from homology"/>
<organism>
    <name type="scientific">Burkholderia pseudomallei (strain 1106a)</name>
    <dbReference type="NCBI Taxonomy" id="357348"/>
    <lineage>
        <taxon>Bacteria</taxon>
        <taxon>Pseudomonadati</taxon>
        <taxon>Pseudomonadota</taxon>
        <taxon>Betaproteobacteria</taxon>
        <taxon>Burkholderiales</taxon>
        <taxon>Burkholderiaceae</taxon>
        <taxon>Burkholderia</taxon>
        <taxon>pseudomallei group</taxon>
    </lineage>
</organism>
<keyword id="KW-0678">Repressor</keyword>
<keyword id="KW-0687">Ribonucleoprotein</keyword>
<keyword id="KW-0689">Ribosomal protein</keyword>
<keyword id="KW-0694">RNA-binding</keyword>
<keyword id="KW-0699">rRNA-binding</keyword>
<keyword id="KW-0810">Translation regulation</keyword>
<keyword id="KW-0820">tRNA-binding</keyword>
<protein>
    <recommendedName>
        <fullName evidence="1">Large ribosomal subunit protein uL1</fullName>
    </recommendedName>
    <alternativeName>
        <fullName evidence="2">50S ribosomal protein L1</fullName>
    </alternativeName>
</protein>
<sequence length="232" mass="24321">MAKISKRRQAFAAKVDRQKLYPIDDALALVKECASAKFDESIDVAVQLGIDAKKSDQVVRGSVVLPAGTGKSVRVAVFAQGEKAEQARAAGAEVVGMEDLAEQIKAGQMDFDIVIASPDTMRIVGTLGQILGPRGLMPNPKVGTVTPDVATAVKNAKAGQVQFRVDKAGIIHATIGRASFEPTALRTNLSALIEALQKAKPATSKGVYLRKIALSSTMGVGVRVDQGSLAAQ</sequence>
<feature type="chain" id="PRO_0000307977" description="Large ribosomal subunit protein uL1">
    <location>
        <begin position="1"/>
        <end position="232"/>
    </location>
</feature>
<evidence type="ECO:0000255" key="1">
    <source>
        <dbReference type="HAMAP-Rule" id="MF_01318"/>
    </source>
</evidence>
<evidence type="ECO:0000305" key="2"/>
<reference key="1">
    <citation type="journal article" date="2010" name="Genome Biol. Evol.">
        <title>Continuing evolution of Burkholderia mallei through genome reduction and large-scale rearrangements.</title>
        <authorList>
            <person name="Losada L."/>
            <person name="Ronning C.M."/>
            <person name="DeShazer D."/>
            <person name="Woods D."/>
            <person name="Fedorova N."/>
            <person name="Kim H.S."/>
            <person name="Shabalina S.A."/>
            <person name="Pearson T.R."/>
            <person name="Brinkac L."/>
            <person name="Tan P."/>
            <person name="Nandi T."/>
            <person name="Crabtree J."/>
            <person name="Badger J."/>
            <person name="Beckstrom-Sternberg S."/>
            <person name="Saqib M."/>
            <person name="Schutzer S.E."/>
            <person name="Keim P."/>
            <person name="Nierman W.C."/>
        </authorList>
    </citation>
    <scope>NUCLEOTIDE SEQUENCE [LARGE SCALE GENOMIC DNA]</scope>
    <source>
        <strain>1106a</strain>
    </source>
</reference>
<dbReference type="EMBL" id="CP000572">
    <property type="protein sequence ID" value="ABN90074.1"/>
    <property type="molecule type" value="Genomic_DNA"/>
</dbReference>
<dbReference type="RefSeq" id="WP_004185135.1">
    <property type="nucleotide sequence ID" value="NC_009076.1"/>
</dbReference>
<dbReference type="SMR" id="A3P0C8"/>
<dbReference type="GeneID" id="93061844"/>
<dbReference type="KEGG" id="bpl:BURPS1106A_3819"/>
<dbReference type="HOGENOM" id="CLU_062853_0_0_4"/>
<dbReference type="Proteomes" id="UP000006738">
    <property type="component" value="Chromosome I"/>
</dbReference>
<dbReference type="GO" id="GO:0022625">
    <property type="term" value="C:cytosolic large ribosomal subunit"/>
    <property type="evidence" value="ECO:0007669"/>
    <property type="project" value="TreeGrafter"/>
</dbReference>
<dbReference type="GO" id="GO:0019843">
    <property type="term" value="F:rRNA binding"/>
    <property type="evidence" value="ECO:0007669"/>
    <property type="project" value="UniProtKB-UniRule"/>
</dbReference>
<dbReference type="GO" id="GO:0003735">
    <property type="term" value="F:structural constituent of ribosome"/>
    <property type="evidence" value="ECO:0007669"/>
    <property type="project" value="InterPro"/>
</dbReference>
<dbReference type="GO" id="GO:0000049">
    <property type="term" value="F:tRNA binding"/>
    <property type="evidence" value="ECO:0007669"/>
    <property type="project" value="UniProtKB-KW"/>
</dbReference>
<dbReference type="GO" id="GO:0006417">
    <property type="term" value="P:regulation of translation"/>
    <property type="evidence" value="ECO:0007669"/>
    <property type="project" value="UniProtKB-KW"/>
</dbReference>
<dbReference type="GO" id="GO:0006412">
    <property type="term" value="P:translation"/>
    <property type="evidence" value="ECO:0007669"/>
    <property type="project" value="UniProtKB-UniRule"/>
</dbReference>
<dbReference type="CDD" id="cd00403">
    <property type="entry name" value="Ribosomal_L1"/>
    <property type="match status" value="1"/>
</dbReference>
<dbReference type="FunFam" id="3.40.50.790:FF:000001">
    <property type="entry name" value="50S ribosomal protein L1"/>
    <property type="match status" value="1"/>
</dbReference>
<dbReference type="Gene3D" id="3.30.190.20">
    <property type="match status" value="1"/>
</dbReference>
<dbReference type="Gene3D" id="3.40.50.790">
    <property type="match status" value="1"/>
</dbReference>
<dbReference type="HAMAP" id="MF_01318_B">
    <property type="entry name" value="Ribosomal_uL1_B"/>
    <property type="match status" value="1"/>
</dbReference>
<dbReference type="InterPro" id="IPR005878">
    <property type="entry name" value="Ribosom_uL1_bac-type"/>
</dbReference>
<dbReference type="InterPro" id="IPR002143">
    <property type="entry name" value="Ribosomal_uL1"/>
</dbReference>
<dbReference type="InterPro" id="IPR023674">
    <property type="entry name" value="Ribosomal_uL1-like"/>
</dbReference>
<dbReference type="InterPro" id="IPR028364">
    <property type="entry name" value="Ribosomal_uL1/biogenesis"/>
</dbReference>
<dbReference type="InterPro" id="IPR016095">
    <property type="entry name" value="Ribosomal_uL1_3-a/b-sand"/>
</dbReference>
<dbReference type="InterPro" id="IPR023673">
    <property type="entry name" value="Ribosomal_uL1_CS"/>
</dbReference>
<dbReference type="NCBIfam" id="TIGR01169">
    <property type="entry name" value="rplA_bact"/>
    <property type="match status" value="1"/>
</dbReference>
<dbReference type="PANTHER" id="PTHR36427">
    <property type="entry name" value="54S RIBOSOMAL PROTEIN L1, MITOCHONDRIAL"/>
    <property type="match status" value="1"/>
</dbReference>
<dbReference type="PANTHER" id="PTHR36427:SF3">
    <property type="entry name" value="LARGE RIBOSOMAL SUBUNIT PROTEIN UL1M"/>
    <property type="match status" value="1"/>
</dbReference>
<dbReference type="Pfam" id="PF00687">
    <property type="entry name" value="Ribosomal_L1"/>
    <property type="match status" value="1"/>
</dbReference>
<dbReference type="PIRSF" id="PIRSF002155">
    <property type="entry name" value="Ribosomal_L1"/>
    <property type="match status" value="1"/>
</dbReference>
<dbReference type="SUPFAM" id="SSF56808">
    <property type="entry name" value="Ribosomal protein L1"/>
    <property type="match status" value="1"/>
</dbReference>
<dbReference type="PROSITE" id="PS01199">
    <property type="entry name" value="RIBOSOMAL_L1"/>
    <property type="match status" value="1"/>
</dbReference>
<name>RL1_BURP0</name>